<proteinExistence type="inferred from homology"/>
<sequence>MAKQKFERTKPHVNVGTIGHVDHGKTTLTAAITKVLALQGAAQFVSYDQIDNAPEERARGITIAIRHVEYQTAKRHYAHVDCPGHADYIKNMITGAAQMDGAILVVSAPDGPMPQTREHVLLARQVQVPAMVVFLNKVDMMDDEELLELVELELRELLSNHGFPGDEIPIIRGSALAALSSTSTDINAPEYQCILDLMNAVDEYIPTPVREVDKPFLMPIEDVFGIKGRGTVVTGRIERGKVKMGDTVEIVGMSHEAPKKTVVTGVEMFQKTLDEGIAGDNVGVLLRGIERTEVERGQVLAAPGSIKPHAKFKANVYVLKKEEGGRHTPFFPGYRPQFYIRTTDVTGAISLPAGVEMVMPGDNIEMLVELIVPVAIEEGLRFAIREGGRTVGAGVVSAIVD</sequence>
<dbReference type="EC" id="3.6.5.3" evidence="2"/>
<dbReference type="EMBL" id="CP000804">
    <property type="protein sequence ID" value="ABU60061.1"/>
    <property type="molecule type" value="Genomic_DNA"/>
</dbReference>
<dbReference type="RefSeq" id="WP_012122483.1">
    <property type="nucleotide sequence ID" value="NC_009767.1"/>
</dbReference>
<dbReference type="SMR" id="A7NR65"/>
<dbReference type="STRING" id="383372.Rcas_4028"/>
<dbReference type="KEGG" id="rca:Rcas_4028"/>
<dbReference type="eggNOG" id="COG0050">
    <property type="taxonomic scope" value="Bacteria"/>
</dbReference>
<dbReference type="HOGENOM" id="CLU_007265_0_1_0"/>
<dbReference type="OrthoDB" id="9804504at2"/>
<dbReference type="Proteomes" id="UP000000263">
    <property type="component" value="Chromosome"/>
</dbReference>
<dbReference type="GO" id="GO:0005829">
    <property type="term" value="C:cytosol"/>
    <property type="evidence" value="ECO:0007669"/>
    <property type="project" value="TreeGrafter"/>
</dbReference>
<dbReference type="GO" id="GO:0005525">
    <property type="term" value="F:GTP binding"/>
    <property type="evidence" value="ECO:0007669"/>
    <property type="project" value="UniProtKB-UniRule"/>
</dbReference>
<dbReference type="GO" id="GO:0003924">
    <property type="term" value="F:GTPase activity"/>
    <property type="evidence" value="ECO:0007669"/>
    <property type="project" value="InterPro"/>
</dbReference>
<dbReference type="GO" id="GO:0003746">
    <property type="term" value="F:translation elongation factor activity"/>
    <property type="evidence" value="ECO:0007669"/>
    <property type="project" value="UniProtKB-UniRule"/>
</dbReference>
<dbReference type="CDD" id="cd01884">
    <property type="entry name" value="EF_Tu"/>
    <property type="match status" value="1"/>
</dbReference>
<dbReference type="CDD" id="cd03697">
    <property type="entry name" value="EFTU_II"/>
    <property type="match status" value="1"/>
</dbReference>
<dbReference type="CDD" id="cd03707">
    <property type="entry name" value="EFTU_III"/>
    <property type="match status" value="1"/>
</dbReference>
<dbReference type="FunFam" id="2.40.30.10:FF:000001">
    <property type="entry name" value="Elongation factor Tu"/>
    <property type="match status" value="1"/>
</dbReference>
<dbReference type="FunFam" id="3.40.50.300:FF:000003">
    <property type="entry name" value="Elongation factor Tu"/>
    <property type="match status" value="1"/>
</dbReference>
<dbReference type="Gene3D" id="3.40.50.300">
    <property type="entry name" value="P-loop containing nucleotide triphosphate hydrolases"/>
    <property type="match status" value="1"/>
</dbReference>
<dbReference type="Gene3D" id="2.40.30.10">
    <property type="entry name" value="Translation factors"/>
    <property type="match status" value="2"/>
</dbReference>
<dbReference type="HAMAP" id="MF_00118_B">
    <property type="entry name" value="EF_Tu_B"/>
    <property type="match status" value="1"/>
</dbReference>
<dbReference type="InterPro" id="IPR041709">
    <property type="entry name" value="EF-Tu_GTP-bd"/>
</dbReference>
<dbReference type="InterPro" id="IPR050055">
    <property type="entry name" value="EF-Tu_GTPase"/>
</dbReference>
<dbReference type="InterPro" id="IPR004161">
    <property type="entry name" value="EFTu-like_2"/>
</dbReference>
<dbReference type="InterPro" id="IPR033720">
    <property type="entry name" value="EFTU_2"/>
</dbReference>
<dbReference type="InterPro" id="IPR031157">
    <property type="entry name" value="G_TR_CS"/>
</dbReference>
<dbReference type="InterPro" id="IPR027417">
    <property type="entry name" value="P-loop_NTPase"/>
</dbReference>
<dbReference type="InterPro" id="IPR005225">
    <property type="entry name" value="Small_GTP-bd"/>
</dbReference>
<dbReference type="InterPro" id="IPR000795">
    <property type="entry name" value="T_Tr_GTP-bd_dom"/>
</dbReference>
<dbReference type="InterPro" id="IPR009000">
    <property type="entry name" value="Transl_B-barrel_sf"/>
</dbReference>
<dbReference type="InterPro" id="IPR009001">
    <property type="entry name" value="Transl_elong_EF1A/Init_IF2_C"/>
</dbReference>
<dbReference type="InterPro" id="IPR004541">
    <property type="entry name" value="Transl_elong_EFTu/EF1A_bac/org"/>
</dbReference>
<dbReference type="InterPro" id="IPR004160">
    <property type="entry name" value="Transl_elong_EFTu/EF1A_C"/>
</dbReference>
<dbReference type="NCBIfam" id="TIGR00485">
    <property type="entry name" value="EF-Tu"/>
    <property type="match status" value="1"/>
</dbReference>
<dbReference type="NCBIfam" id="NF000766">
    <property type="entry name" value="PRK00049.1"/>
    <property type="match status" value="1"/>
</dbReference>
<dbReference type="NCBIfam" id="NF009372">
    <property type="entry name" value="PRK12735.1"/>
    <property type="match status" value="1"/>
</dbReference>
<dbReference type="NCBIfam" id="NF009373">
    <property type="entry name" value="PRK12736.1"/>
    <property type="match status" value="1"/>
</dbReference>
<dbReference type="NCBIfam" id="TIGR00231">
    <property type="entry name" value="small_GTP"/>
    <property type="match status" value="1"/>
</dbReference>
<dbReference type="PANTHER" id="PTHR43721:SF22">
    <property type="entry name" value="ELONGATION FACTOR TU, MITOCHONDRIAL"/>
    <property type="match status" value="1"/>
</dbReference>
<dbReference type="PANTHER" id="PTHR43721">
    <property type="entry name" value="ELONGATION FACTOR TU-RELATED"/>
    <property type="match status" value="1"/>
</dbReference>
<dbReference type="Pfam" id="PF00009">
    <property type="entry name" value="GTP_EFTU"/>
    <property type="match status" value="1"/>
</dbReference>
<dbReference type="Pfam" id="PF03144">
    <property type="entry name" value="GTP_EFTU_D2"/>
    <property type="match status" value="1"/>
</dbReference>
<dbReference type="Pfam" id="PF03143">
    <property type="entry name" value="GTP_EFTU_D3"/>
    <property type="match status" value="1"/>
</dbReference>
<dbReference type="PRINTS" id="PR00315">
    <property type="entry name" value="ELONGATNFCT"/>
</dbReference>
<dbReference type="SUPFAM" id="SSF50465">
    <property type="entry name" value="EF-Tu/eEF-1alpha/eIF2-gamma C-terminal domain"/>
    <property type="match status" value="1"/>
</dbReference>
<dbReference type="SUPFAM" id="SSF52540">
    <property type="entry name" value="P-loop containing nucleoside triphosphate hydrolases"/>
    <property type="match status" value="1"/>
</dbReference>
<dbReference type="SUPFAM" id="SSF50447">
    <property type="entry name" value="Translation proteins"/>
    <property type="match status" value="1"/>
</dbReference>
<dbReference type="PROSITE" id="PS00301">
    <property type="entry name" value="G_TR_1"/>
    <property type="match status" value="1"/>
</dbReference>
<dbReference type="PROSITE" id="PS51722">
    <property type="entry name" value="G_TR_2"/>
    <property type="match status" value="1"/>
</dbReference>
<feature type="chain" id="PRO_0000337502" description="Elongation factor Tu 1">
    <location>
        <begin position="1"/>
        <end position="401"/>
    </location>
</feature>
<feature type="domain" description="tr-type G">
    <location>
        <begin position="10"/>
        <end position="209"/>
    </location>
</feature>
<feature type="region of interest" description="G1" evidence="1">
    <location>
        <begin position="19"/>
        <end position="26"/>
    </location>
</feature>
<feature type="region of interest" description="G2" evidence="1">
    <location>
        <begin position="60"/>
        <end position="64"/>
    </location>
</feature>
<feature type="region of interest" description="G3" evidence="1">
    <location>
        <begin position="81"/>
        <end position="84"/>
    </location>
</feature>
<feature type="region of interest" description="G4" evidence="1">
    <location>
        <begin position="136"/>
        <end position="139"/>
    </location>
</feature>
<feature type="region of interest" description="G5" evidence="1">
    <location>
        <begin position="174"/>
        <end position="176"/>
    </location>
</feature>
<feature type="binding site" evidence="2">
    <location>
        <begin position="19"/>
        <end position="26"/>
    </location>
    <ligand>
        <name>GTP</name>
        <dbReference type="ChEBI" id="CHEBI:37565"/>
    </ligand>
</feature>
<feature type="binding site" evidence="2">
    <location>
        <position position="26"/>
    </location>
    <ligand>
        <name>Mg(2+)</name>
        <dbReference type="ChEBI" id="CHEBI:18420"/>
    </ligand>
</feature>
<feature type="binding site" evidence="2">
    <location>
        <begin position="81"/>
        <end position="85"/>
    </location>
    <ligand>
        <name>GTP</name>
        <dbReference type="ChEBI" id="CHEBI:37565"/>
    </ligand>
</feature>
<feature type="binding site" evidence="2">
    <location>
        <begin position="136"/>
        <end position="139"/>
    </location>
    <ligand>
        <name>GTP</name>
        <dbReference type="ChEBI" id="CHEBI:37565"/>
    </ligand>
</feature>
<keyword id="KW-0963">Cytoplasm</keyword>
<keyword id="KW-0251">Elongation factor</keyword>
<keyword id="KW-0342">GTP-binding</keyword>
<keyword id="KW-0378">Hydrolase</keyword>
<keyword id="KW-0460">Magnesium</keyword>
<keyword id="KW-0479">Metal-binding</keyword>
<keyword id="KW-0547">Nucleotide-binding</keyword>
<keyword id="KW-0648">Protein biosynthesis</keyword>
<keyword id="KW-1185">Reference proteome</keyword>
<accession>A7NR65</accession>
<comment type="function">
    <text evidence="2">GTP hydrolase that promotes the GTP-dependent binding of aminoacyl-tRNA to the A-site of ribosomes during protein biosynthesis.</text>
</comment>
<comment type="catalytic activity">
    <reaction evidence="2">
        <text>GTP + H2O = GDP + phosphate + H(+)</text>
        <dbReference type="Rhea" id="RHEA:19669"/>
        <dbReference type="ChEBI" id="CHEBI:15377"/>
        <dbReference type="ChEBI" id="CHEBI:15378"/>
        <dbReference type="ChEBI" id="CHEBI:37565"/>
        <dbReference type="ChEBI" id="CHEBI:43474"/>
        <dbReference type="ChEBI" id="CHEBI:58189"/>
        <dbReference type="EC" id="3.6.5.3"/>
    </reaction>
    <physiologicalReaction direction="left-to-right" evidence="2">
        <dbReference type="Rhea" id="RHEA:19670"/>
    </physiologicalReaction>
</comment>
<comment type="subunit">
    <text evidence="2">Monomer.</text>
</comment>
<comment type="subcellular location">
    <subcellularLocation>
        <location evidence="2">Cytoplasm</location>
    </subcellularLocation>
</comment>
<comment type="similarity">
    <text evidence="2">Belongs to the TRAFAC class translation factor GTPase superfamily. Classic translation factor GTPase family. EF-Tu/EF-1A subfamily.</text>
</comment>
<organism>
    <name type="scientific">Roseiflexus castenholzii (strain DSM 13941 / HLO8)</name>
    <dbReference type="NCBI Taxonomy" id="383372"/>
    <lineage>
        <taxon>Bacteria</taxon>
        <taxon>Bacillati</taxon>
        <taxon>Chloroflexota</taxon>
        <taxon>Chloroflexia</taxon>
        <taxon>Chloroflexales</taxon>
        <taxon>Roseiflexineae</taxon>
        <taxon>Roseiflexaceae</taxon>
        <taxon>Roseiflexus</taxon>
    </lineage>
</organism>
<protein>
    <recommendedName>
        <fullName evidence="2">Elongation factor Tu 1</fullName>
        <shortName evidence="2">EF-Tu 1</shortName>
        <ecNumber evidence="2">3.6.5.3</ecNumber>
    </recommendedName>
</protein>
<gene>
    <name evidence="2" type="primary">tuf1</name>
    <name type="ordered locus">Rcas_4028</name>
</gene>
<evidence type="ECO:0000250" key="1"/>
<evidence type="ECO:0000255" key="2">
    <source>
        <dbReference type="HAMAP-Rule" id="MF_00118"/>
    </source>
</evidence>
<name>EFTU1_ROSCS</name>
<reference key="1">
    <citation type="submission" date="2007-08" db="EMBL/GenBank/DDBJ databases">
        <title>Complete sequence of Roseiflexus castenholzii DSM 13941.</title>
        <authorList>
            <consortium name="US DOE Joint Genome Institute"/>
            <person name="Copeland A."/>
            <person name="Lucas S."/>
            <person name="Lapidus A."/>
            <person name="Barry K."/>
            <person name="Glavina del Rio T."/>
            <person name="Dalin E."/>
            <person name="Tice H."/>
            <person name="Pitluck S."/>
            <person name="Thompson L.S."/>
            <person name="Brettin T."/>
            <person name="Bruce D."/>
            <person name="Detter J.C."/>
            <person name="Han C."/>
            <person name="Tapia R."/>
            <person name="Schmutz J."/>
            <person name="Larimer F."/>
            <person name="Land M."/>
            <person name="Hauser L."/>
            <person name="Kyrpides N."/>
            <person name="Mikhailova N."/>
            <person name="Bryant D.A."/>
            <person name="Hanada S."/>
            <person name="Tsukatani Y."/>
            <person name="Richardson P."/>
        </authorList>
    </citation>
    <scope>NUCLEOTIDE SEQUENCE [LARGE SCALE GENOMIC DNA]</scope>
    <source>
        <strain>DSM 13941 / HLO8</strain>
    </source>
</reference>